<proteinExistence type="evidence at transcript level"/>
<sequence>MIEERGSSRGSREDRGSSRGSSRGSFEDKGSSHDWKGMGGSTPRPRLTRLVAKKDRNYDAKVDSDFDDDSSVHSTSSPRLSPASSDNLSKITIGQQSFRVGGDVDNLKALYEALGATSPAALGIEASDWESRRKSAVYSRPTSPPRVSHDTGQSSYSHDFQFPASRVDSSLESPPLSPRGLAPMSPVRPIEVEWRKHRNNYAKPTISNRPGRENNPLKPSQPPPTMFPQSSGLRTPDPLPPIDTSTSRLGRESLELQNRHTTLGAYSPPGLRKVHSELTGLVSARSDGAGWASDIESAKRNEDLAVASPVFRDNLPSAAVAMPNGSLVRASFTPRDSNRMNSVRSNSHGLRWNSCHAQEAEAIAKTALEETSNGLRIEDPERIRDLEKPSPLIIEKVDEPLSEVSSSVSTESSPSVIPKRPPWDTWAKGEFLGSGTFGSVYEGVARNGTFFAVKEVNLADEGKLGRQAVKQLEREIALLSDIQHPNIVQYLGTERTEDKLYIFLELLNKGSLANLYRKYGLFYEQIKAYTEQILTGLKYLHDRKIIHRDIKCANILVDTNGVVKLADFGMAKQVEKFGFAKSFVGSAHWMAPEVVDPKQQYNFAADIWSLGCTVLEMATEGPPFGELEFIAVFWKIGRGEAPLIPDDLEDELKDFIAQCLQVDASKRPTCDMLLAHPFITGEEMTGPVTQMGTPGLSTISEERSVDMSVTSSIAVSSNSGTSPRVIENLVNHLSIERRPKSMRTLRSELSMSSAESIAS</sequence>
<feature type="chain" id="PRO_0000443376" description="Mitogen-activated protein kinase kinase kinase 1a">
    <location>
        <begin position="1"/>
        <end position="759"/>
    </location>
</feature>
<feature type="domain" description="Protein kinase" evidence="2">
    <location>
        <begin position="426"/>
        <end position="679"/>
    </location>
</feature>
<feature type="region of interest" description="Disordered" evidence="3">
    <location>
        <begin position="1"/>
        <end position="90"/>
    </location>
</feature>
<feature type="region of interest" description="Disordered" evidence="3">
    <location>
        <begin position="122"/>
        <end position="160"/>
    </location>
</feature>
<feature type="region of interest" description="Disordered" evidence="3">
    <location>
        <begin position="165"/>
        <end position="184"/>
    </location>
</feature>
<feature type="region of interest" description="Disordered" evidence="3">
    <location>
        <begin position="195"/>
        <end position="239"/>
    </location>
</feature>
<feature type="compositionally biased region" description="Basic and acidic residues" evidence="3">
    <location>
        <begin position="1"/>
        <end position="17"/>
    </location>
</feature>
<feature type="compositionally biased region" description="Basic and acidic residues" evidence="3">
    <location>
        <begin position="25"/>
        <end position="36"/>
    </location>
</feature>
<feature type="compositionally biased region" description="Basic and acidic residues" evidence="3">
    <location>
        <begin position="52"/>
        <end position="64"/>
    </location>
</feature>
<feature type="compositionally biased region" description="Low complexity" evidence="3">
    <location>
        <begin position="72"/>
        <end position="85"/>
    </location>
</feature>
<feature type="active site" description="Proton acceptor" evidence="2">
    <location>
        <position position="549"/>
    </location>
</feature>
<feature type="binding site" evidence="2">
    <location>
        <begin position="432"/>
        <end position="440"/>
    </location>
    <ligand>
        <name>ATP</name>
        <dbReference type="ChEBI" id="CHEBI:30616"/>
    </ligand>
</feature>
<feature type="binding site" evidence="2">
    <location>
        <position position="454"/>
    </location>
    <ligand>
        <name>ATP</name>
        <dbReference type="ChEBI" id="CHEBI:30616"/>
    </ligand>
</feature>
<organism>
    <name type="scientific">Physcomitrium patens</name>
    <name type="common">Spreading-leaved earth moss</name>
    <name type="synonym">Physcomitrella patens</name>
    <dbReference type="NCBI Taxonomy" id="3218"/>
    <lineage>
        <taxon>Eukaryota</taxon>
        <taxon>Viridiplantae</taxon>
        <taxon>Streptophyta</taxon>
        <taxon>Embryophyta</taxon>
        <taxon>Bryophyta</taxon>
        <taxon>Bryophytina</taxon>
        <taxon>Bryopsida</taxon>
        <taxon>Funariidae</taxon>
        <taxon>Funariales</taxon>
        <taxon>Funariaceae</taxon>
        <taxon>Physcomitrium</taxon>
    </lineage>
</organism>
<keyword id="KW-0067">ATP-binding</keyword>
<keyword id="KW-1003">Cell membrane</keyword>
<keyword id="KW-0418">Kinase</keyword>
<keyword id="KW-0472">Membrane</keyword>
<keyword id="KW-0547">Nucleotide-binding</keyword>
<keyword id="KW-0611">Plant defense</keyword>
<keyword id="KW-1185">Reference proteome</keyword>
<keyword id="KW-0723">Serine/threonine-protein kinase</keyword>
<keyword id="KW-0808">Transferase</keyword>
<protein>
    <recommendedName>
        <fullName evidence="6">Mitogen-activated protein kinase kinase kinase 1a</fullName>
        <shortName evidence="5">PpMEKK1a</shortName>
        <ecNumber evidence="1">2.7.11.25</ecNumber>
    </recommendedName>
    <alternativeName>
        <fullName evidence="5">MAP kinase kinase kinase 1a</fullName>
    </alternativeName>
</protein>
<accession>A9SY39</accession>
<dbReference type="EC" id="2.7.11.25" evidence="1"/>
<dbReference type="EMBL" id="DS545025">
    <property type="protein sequence ID" value="EDQ63834.1"/>
    <property type="status" value="ALT_SEQ"/>
    <property type="molecule type" value="Genomic_DNA"/>
</dbReference>
<dbReference type="RefSeq" id="XP_001771274.1">
    <property type="nucleotide sequence ID" value="XM_001771222.1"/>
</dbReference>
<dbReference type="SMR" id="A9SY39"/>
<dbReference type="FunCoup" id="A9SY39">
    <property type="interactions" value="1903"/>
</dbReference>
<dbReference type="PaxDb" id="3218-PP1S136_5V6.3"/>
<dbReference type="EnsemblPlants" id="Pp3c7_4010V3.1">
    <property type="protein sequence ID" value="PAC:32925011.CDS.1"/>
    <property type="gene ID" value="Pp3c7_4010"/>
</dbReference>
<dbReference type="EnsemblPlants" id="Pp3c7_4010V3.2">
    <property type="protein sequence ID" value="PAC:32925012.CDS.1"/>
    <property type="gene ID" value="Pp3c7_4010"/>
</dbReference>
<dbReference type="Gramene" id="Pp3c7_4010V3.1">
    <property type="protein sequence ID" value="PAC:32925011.CDS.1"/>
    <property type="gene ID" value="Pp3c7_4010"/>
</dbReference>
<dbReference type="Gramene" id="Pp3c7_4010V3.2">
    <property type="protein sequence ID" value="PAC:32925012.CDS.1"/>
    <property type="gene ID" value="Pp3c7_4010"/>
</dbReference>
<dbReference type="eggNOG" id="KOG0198">
    <property type="taxonomic scope" value="Eukaryota"/>
</dbReference>
<dbReference type="HOGENOM" id="CLU_000288_2_6_1"/>
<dbReference type="InParanoid" id="A9SY39"/>
<dbReference type="OrthoDB" id="266718at2759"/>
<dbReference type="Proteomes" id="UP000006727">
    <property type="component" value="Chromosome 7"/>
</dbReference>
<dbReference type="GO" id="GO:0005737">
    <property type="term" value="C:cytoplasm"/>
    <property type="evidence" value="ECO:0000318"/>
    <property type="project" value="GO_Central"/>
</dbReference>
<dbReference type="GO" id="GO:0005886">
    <property type="term" value="C:plasma membrane"/>
    <property type="evidence" value="ECO:0000250"/>
    <property type="project" value="UniProtKB"/>
</dbReference>
<dbReference type="GO" id="GO:0005524">
    <property type="term" value="F:ATP binding"/>
    <property type="evidence" value="ECO:0007669"/>
    <property type="project" value="UniProtKB-KW"/>
</dbReference>
<dbReference type="GO" id="GO:0004709">
    <property type="term" value="F:MAP kinase kinase kinase activity"/>
    <property type="evidence" value="ECO:0000250"/>
    <property type="project" value="UniProtKB"/>
</dbReference>
<dbReference type="GO" id="GO:0106310">
    <property type="term" value="F:protein serine kinase activity"/>
    <property type="evidence" value="ECO:0007669"/>
    <property type="project" value="RHEA"/>
</dbReference>
<dbReference type="GO" id="GO:0006952">
    <property type="term" value="P:defense response"/>
    <property type="evidence" value="ECO:0007669"/>
    <property type="project" value="UniProtKB-KW"/>
</dbReference>
<dbReference type="GO" id="GO:0000165">
    <property type="term" value="P:MAPK cascade"/>
    <property type="evidence" value="ECO:0000318"/>
    <property type="project" value="GO_Central"/>
</dbReference>
<dbReference type="GO" id="GO:0010200">
    <property type="term" value="P:response to chitin"/>
    <property type="evidence" value="ECO:0000315"/>
    <property type="project" value="UniProtKB"/>
</dbReference>
<dbReference type="CDD" id="cd06632">
    <property type="entry name" value="STKc_MEKK1_plant"/>
    <property type="match status" value="1"/>
</dbReference>
<dbReference type="FunFam" id="1.10.510.10:FF:000359">
    <property type="entry name" value="Mitogen-activated protein kinase 1, putative, expressed"/>
    <property type="match status" value="1"/>
</dbReference>
<dbReference type="Gene3D" id="1.10.510.10">
    <property type="entry name" value="Transferase(Phosphotransferase) domain 1"/>
    <property type="match status" value="1"/>
</dbReference>
<dbReference type="InterPro" id="IPR011009">
    <property type="entry name" value="Kinase-like_dom_sf"/>
</dbReference>
<dbReference type="InterPro" id="IPR050538">
    <property type="entry name" value="MAP_kinase_kinase_kinase"/>
</dbReference>
<dbReference type="InterPro" id="IPR000719">
    <property type="entry name" value="Prot_kinase_dom"/>
</dbReference>
<dbReference type="InterPro" id="IPR017441">
    <property type="entry name" value="Protein_kinase_ATP_BS"/>
</dbReference>
<dbReference type="InterPro" id="IPR001245">
    <property type="entry name" value="Ser-Thr/Tyr_kinase_cat_dom"/>
</dbReference>
<dbReference type="InterPro" id="IPR008271">
    <property type="entry name" value="Ser/Thr_kinase_AS"/>
</dbReference>
<dbReference type="PANTHER" id="PTHR48016">
    <property type="entry name" value="MAP KINASE KINASE KINASE SSK2-RELATED-RELATED"/>
    <property type="match status" value="1"/>
</dbReference>
<dbReference type="PANTHER" id="PTHR48016:SF29">
    <property type="entry name" value="MITOGEN-ACTIVATED PROTEIN KINASE KINASE KINASE 1-RELATED"/>
    <property type="match status" value="1"/>
</dbReference>
<dbReference type="Pfam" id="PF00069">
    <property type="entry name" value="Pkinase"/>
    <property type="match status" value="1"/>
</dbReference>
<dbReference type="PRINTS" id="PR00109">
    <property type="entry name" value="TYRKINASE"/>
</dbReference>
<dbReference type="SMART" id="SM00220">
    <property type="entry name" value="S_TKc"/>
    <property type="match status" value="1"/>
</dbReference>
<dbReference type="SUPFAM" id="SSF56112">
    <property type="entry name" value="Protein kinase-like (PK-like)"/>
    <property type="match status" value="1"/>
</dbReference>
<dbReference type="PROSITE" id="PS00107">
    <property type="entry name" value="PROTEIN_KINASE_ATP"/>
    <property type="match status" value="1"/>
</dbReference>
<dbReference type="PROSITE" id="PS50011">
    <property type="entry name" value="PROTEIN_KINASE_DOM"/>
    <property type="match status" value="1"/>
</dbReference>
<dbReference type="PROSITE" id="PS00108">
    <property type="entry name" value="PROTEIN_KINASE_ST"/>
    <property type="match status" value="1"/>
</dbReference>
<gene>
    <name evidence="5" type="primary">MEKK1a</name>
    <name evidence="7" type="ORF">PHYPADRAFT_15847</name>
</gene>
<comment type="function">
    <text evidence="4">The CERK1, MEKK1a/b, MKK1a/b/c and MPK4a/b proteins are involved in pathogen defense. The pathway induces rapid growth inhibition, cell wall depositions and accumulation of defense-related transcripts. This protein is required for responses to chitin and acts redundantly with MEKK1b.</text>
</comment>
<comment type="catalytic activity">
    <reaction evidence="1">
        <text>L-seryl-[protein] + ATP = O-phospho-L-seryl-[protein] + ADP + H(+)</text>
        <dbReference type="Rhea" id="RHEA:17989"/>
        <dbReference type="Rhea" id="RHEA-COMP:9863"/>
        <dbReference type="Rhea" id="RHEA-COMP:11604"/>
        <dbReference type="ChEBI" id="CHEBI:15378"/>
        <dbReference type="ChEBI" id="CHEBI:29999"/>
        <dbReference type="ChEBI" id="CHEBI:30616"/>
        <dbReference type="ChEBI" id="CHEBI:83421"/>
        <dbReference type="ChEBI" id="CHEBI:456216"/>
        <dbReference type="EC" id="2.7.11.25"/>
    </reaction>
</comment>
<comment type="catalytic activity">
    <reaction evidence="1">
        <text>L-threonyl-[protein] + ATP = O-phospho-L-threonyl-[protein] + ADP + H(+)</text>
        <dbReference type="Rhea" id="RHEA:46608"/>
        <dbReference type="Rhea" id="RHEA-COMP:11060"/>
        <dbReference type="Rhea" id="RHEA-COMP:11605"/>
        <dbReference type="ChEBI" id="CHEBI:15378"/>
        <dbReference type="ChEBI" id="CHEBI:30013"/>
        <dbReference type="ChEBI" id="CHEBI:30616"/>
        <dbReference type="ChEBI" id="CHEBI:61977"/>
        <dbReference type="ChEBI" id="CHEBI:456216"/>
        <dbReference type="EC" id="2.7.11.25"/>
    </reaction>
</comment>
<comment type="subcellular location">
    <subcellularLocation>
        <location evidence="1">Cell membrane</location>
    </subcellularLocation>
</comment>
<comment type="induction">
    <text evidence="4">Up-regulated in response to chitosan.</text>
</comment>
<comment type="disruption phenotype">
    <text evidence="4">Reduced chitin-induced MPK phosphorylation. Strongly reduced chitin-induced cell wall-associated depositions. Reduced accumulation of PAL4 and CHS transcripts in response to chitin. Double deletion mutant MEKK1a/MEKK1b does not phosphorylate MPK and is unable to induce the depositions in response to chitin. The growth of the double mutant is inhibited within 1 minute after chitin exposure as in wild-type.</text>
</comment>
<comment type="similarity">
    <text evidence="6">Belongs to the protein kinase superfamily. STE Ser/Thr protein kinase family. MAP kinase kinase kinase subfamily.</text>
</comment>
<comment type="sequence caution" evidence="6">
    <conflict type="erroneous gene model prediction">
        <sequence resource="EMBL-CDS" id="EDQ63834"/>
    </conflict>
</comment>
<evidence type="ECO:0000250" key="1">
    <source>
        <dbReference type="UniProtKB" id="Q39008"/>
    </source>
</evidence>
<evidence type="ECO:0000255" key="2">
    <source>
        <dbReference type="PROSITE-ProRule" id="PRU00159"/>
    </source>
</evidence>
<evidence type="ECO:0000256" key="3">
    <source>
        <dbReference type="SAM" id="MobiDB-lite"/>
    </source>
</evidence>
<evidence type="ECO:0000269" key="4">
    <source>
    </source>
</evidence>
<evidence type="ECO:0000303" key="5">
    <source>
    </source>
</evidence>
<evidence type="ECO:0000305" key="6"/>
<evidence type="ECO:0000312" key="7">
    <source>
        <dbReference type="EMBL" id="EDQ63834.1"/>
    </source>
</evidence>
<reference key="1">
    <citation type="journal article" date="2016" name="Plant Cell">
        <title>An innate immunity pathway in the Moss Physcomitrella patens.</title>
        <authorList>
            <person name="Bressendorff S."/>
            <person name="Azevedo R."/>
            <person name="Kenchappa C.S."/>
            <person name="Ponce de Leon I."/>
            <person name="Olsen J.V."/>
            <person name="Rasmussen M.W."/>
            <person name="Erbs G."/>
            <person name="Newman M.A."/>
            <person name="Petersen M."/>
            <person name="Mundy J."/>
        </authorList>
    </citation>
    <scope>NUCLEOTIDE SEQUENCE [GENOMIC DNA]</scope>
    <scope>FUNCTION</scope>
    <scope>INDUCTION</scope>
    <scope>DISRUPTION PHENOTYPE</scope>
    <source>
        <strain evidence="5">cv. Gransden 2004</strain>
    </source>
</reference>
<reference evidence="7" key="2">
    <citation type="journal article" date="2008" name="Science">
        <title>The Physcomitrella genome reveals evolutionary insights into the conquest of land by plants.</title>
        <authorList>
            <person name="Rensing S.A."/>
            <person name="Lang D."/>
            <person name="Zimmer A.D."/>
            <person name="Terry A."/>
            <person name="Salamov A."/>
            <person name="Shapiro H."/>
            <person name="Nishiyama T."/>
            <person name="Perroud P.-F."/>
            <person name="Lindquist E.A."/>
            <person name="Kamisugi Y."/>
            <person name="Tanahashi T."/>
            <person name="Sakakibara K."/>
            <person name="Fujita T."/>
            <person name="Oishi K."/>
            <person name="Shin-I T."/>
            <person name="Kuroki Y."/>
            <person name="Toyoda A."/>
            <person name="Suzuki Y."/>
            <person name="Hashimoto S.-I."/>
            <person name="Yamaguchi K."/>
            <person name="Sugano S."/>
            <person name="Kohara Y."/>
            <person name="Fujiyama A."/>
            <person name="Anterola A."/>
            <person name="Aoki S."/>
            <person name="Ashton N."/>
            <person name="Barbazuk W.B."/>
            <person name="Barker E."/>
            <person name="Bennetzen J.L."/>
            <person name="Blankenship R."/>
            <person name="Cho S.H."/>
            <person name="Dutcher S.K."/>
            <person name="Estelle M."/>
            <person name="Fawcett J.A."/>
            <person name="Gundlach H."/>
            <person name="Hanada K."/>
            <person name="Heyl A."/>
            <person name="Hicks K.A."/>
            <person name="Hughes J."/>
            <person name="Lohr M."/>
            <person name="Mayer K."/>
            <person name="Melkozernov A."/>
            <person name="Murata T."/>
            <person name="Nelson D.R."/>
            <person name="Pils B."/>
            <person name="Prigge M."/>
            <person name="Reiss B."/>
            <person name="Renner T."/>
            <person name="Rombauts S."/>
            <person name="Rushton P.J."/>
            <person name="Sanderfoot A."/>
            <person name="Schween G."/>
            <person name="Shiu S.-H."/>
            <person name="Stueber K."/>
            <person name="Theodoulou F.L."/>
            <person name="Tu H."/>
            <person name="Van de Peer Y."/>
            <person name="Verrier P.J."/>
            <person name="Waters E."/>
            <person name="Wood A."/>
            <person name="Yang L."/>
            <person name="Cove D."/>
            <person name="Cuming A.C."/>
            <person name="Hasebe M."/>
            <person name="Lucas S."/>
            <person name="Mishler B.D."/>
            <person name="Reski R."/>
            <person name="Grigoriev I.V."/>
            <person name="Quatrano R.S."/>
            <person name="Boore J.L."/>
        </authorList>
    </citation>
    <scope>NUCLEOTIDE SEQUENCE [LARGE SCALE GENOMIC DNA] (PARTIAL)</scope>
    <source>
        <strain>cv. Gransden 2004</strain>
    </source>
</reference>
<name>M3K1A_PHYPA</name>